<reference key="1">
    <citation type="journal article" date="2004" name="Proc. Natl. Acad. Sci. U.S.A.">
        <title>The diploid genome sequence of Candida albicans.</title>
        <authorList>
            <person name="Jones T."/>
            <person name="Federspiel N.A."/>
            <person name="Chibana H."/>
            <person name="Dungan J."/>
            <person name="Kalman S."/>
            <person name="Magee B.B."/>
            <person name="Newport G."/>
            <person name="Thorstenson Y.R."/>
            <person name="Agabian N."/>
            <person name="Magee P.T."/>
            <person name="Davis R.W."/>
            <person name="Scherer S."/>
        </authorList>
    </citation>
    <scope>NUCLEOTIDE SEQUENCE [LARGE SCALE GENOMIC DNA]</scope>
    <source>
        <strain>SC5314 / ATCC MYA-2876</strain>
    </source>
</reference>
<reference key="2">
    <citation type="journal article" date="2007" name="Genome Biol.">
        <title>Assembly of the Candida albicans genome into sixteen supercontigs aligned on the eight chromosomes.</title>
        <authorList>
            <person name="van het Hoog M."/>
            <person name="Rast T.J."/>
            <person name="Martchenko M."/>
            <person name="Grindle S."/>
            <person name="Dignard D."/>
            <person name="Hogues H."/>
            <person name="Cuomo C."/>
            <person name="Berriman M."/>
            <person name="Scherer S."/>
            <person name="Magee B.B."/>
            <person name="Whiteway M."/>
            <person name="Chibana H."/>
            <person name="Nantel A."/>
            <person name="Magee P.T."/>
        </authorList>
    </citation>
    <scope>GENOME REANNOTATION</scope>
    <source>
        <strain>SC5314 / ATCC MYA-2876</strain>
    </source>
</reference>
<reference key="3">
    <citation type="journal article" date="2013" name="Genome Biol.">
        <title>Assembly of a phased diploid Candida albicans genome facilitates allele-specific measurements and provides a simple model for repeat and indel structure.</title>
        <authorList>
            <person name="Muzzey D."/>
            <person name="Schwartz K."/>
            <person name="Weissman J.S."/>
            <person name="Sherlock G."/>
        </authorList>
    </citation>
    <scope>NUCLEOTIDE SEQUENCE [LARGE SCALE GENOMIC DNA]</scope>
    <scope>GENOME REANNOTATION</scope>
    <source>
        <strain>SC5314 / ATCC MYA-2876</strain>
    </source>
</reference>
<reference key="4">
    <citation type="journal article" date="2012" name="Cell">
        <title>A recently evolved transcriptional network controls biofilm development in Candida albicans.</title>
        <authorList>
            <person name="Nobile C.J."/>
            <person name="Fox E.P."/>
            <person name="Nett J.E."/>
            <person name="Sorrells T.R."/>
            <person name="Mitrovich Q.M."/>
            <person name="Hernday A.D."/>
            <person name="Tuch B.B."/>
            <person name="Andes D.R."/>
            <person name="Johnson A.D."/>
        </authorList>
    </citation>
    <scope>INDUCTION</scope>
</reference>
<reference key="5">
    <citation type="journal article" date="2012" name="PLoS Pathog.">
        <title>Portrait of Candida albicans adherence regulators.</title>
        <authorList>
            <person name="Finkel J.S."/>
            <person name="Xu W."/>
            <person name="Huang D."/>
            <person name="Hill E.M."/>
            <person name="Desai J.V."/>
            <person name="Woolford C.A."/>
            <person name="Nett J.E."/>
            <person name="Taff H."/>
            <person name="Norice C.T."/>
            <person name="Andes D.R."/>
            <person name="Lanni F."/>
            <person name="Mitchell A.P."/>
        </authorList>
    </citation>
    <scope>FUNCTION</scope>
    <scope>DISRUPTION PHENOTYPE</scope>
</reference>
<dbReference type="EMBL" id="CP017623">
    <property type="protein sequence ID" value="AOW26180.1"/>
    <property type="molecule type" value="Genomic_DNA"/>
</dbReference>
<dbReference type="RefSeq" id="XP_710731.2">
    <property type="nucleotide sequence ID" value="XM_705639.2"/>
</dbReference>
<dbReference type="SMR" id="Q59LX5"/>
<dbReference type="STRING" id="237561.Q59LX5"/>
<dbReference type="EnsemblFungi" id="C1_05090W_A-T">
    <property type="protein sequence ID" value="C1_05090W_A-T-p1"/>
    <property type="gene ID" value="C1_05090W_A"/>
</dbReference>
<dbReference type="GeneID" id="3647670"/>
<dbReference type="KEGG" id="cal:CAALFM_C105090WA"/>
<dbReference type="CGD" id="CAL0000191257">
    <property type="gene designation" value="TRY2"/>
</dbReference>
<dbReference type="VEuPathDB" id="FungiDB:C1_05090W_A"/>
<dbReference type="eggNOG" id="KOG2202">
    <property type="taxonomic scope" value="Eukaryota"/>
</dbReference>
<dbReference type="HOGENOM" id="CLU_062255_0_0_1"/>
<dbReference type="InParanoid" id="Q59LX5"/>
<dbReference type="OMA" id="NDACCEE"/>
<dbReference type="OrthoDB" id="423462at2759"/>
<dbReference type="PRO" id="PR:Q59LX5"/>
<dbReference type="Proteomes" id="UP000000559">
    <property type="component" value="Chromosome 1"/>
</dbReference>
<dbReference type="GO" id="GO:0005681">
    <property type="term" value="C:spliceosomal complex"/>
    <property type="evidence" value="ECO:0000318"/>
    <property type="project" value="GO_Central"/>
</dbReference>
<dbReference type="GO" id="GO:0089701">
    <property type="term" value="C:U2AF complex"/>
    <property type="evidence" value="ECO:0000318"/>
    <property type="project" value="GO_Central"/>
</dbReference>
<dbReference type="GO" id="GO:0030628">
    <property type="term" value="F:pre-mRNA 3'-splice site binding"/>
    <property type="evidence" value="ECO:0000318"/>
    <property type="project" value="GO_Central"/>
</dbReference>
<dbReference type="GO" id="GO:0008270">
    <property type="term" value="F:zinc ion binding"/>
    <property type="evidence" value="ECO:0007669"/>
    <property type="project" value="UniProtKB-KW"/>
</dbReference>
<dbReference type="GO" id="GO:0007155">
    <property type="term" value="P:cell adhesion"/>
    <property type="evidence" value="ECO:0007669"/>
    <property type="project" value="UniProtKB-KW"/>
</dbReference>
<dbReference type="GO" id="GO:0000398">
    <property type="term" value="P:mRNA splicing, via spliceosome"/>
    <property type="evidence" value="ECO:0000318"/>
    <property type="project" value="GO_Central"/>
</dbReference>
<dbReference type="GO" id="GO:1900189">
    <property type="term" value="P:positive regulation of cell adhesion involved in single-species biofilm formation"/>
    <property type="evidence" value="ECO:0000315"/>
    <property type="project" value="CGD"/>
</dbReference>
<dbReference type="GO" id="GO:0010811">
    <property type="term" value="P:positive regulation of cell-substrate adhesion"/>
    <property type="evidence" value="ECO:0000315"/>
    <property type="project" value="CGD"/>
</dbReference>
<dbReference type="GO" id="GO:0006357">
    <property type="term" value="P:regulation of transcription by RNA polymerase II"/>
    <property type="evidence" value="ECO:0000315"/>
    <property type="project" value="CGD"/>
</dbReference>
<dbReference type="GO" id="GO:0044011">
    <property type="term" value="P:single-species biofilm formation on inanimate substrate"/>
    <property type="evidence" value="ECO:0000315"/>
    <property type="project" value="CGD"/>
</dbReference>
<dbReference type="Gene3D" id="3.30.70.330">
    <property type="match status" value="1"/>
</dbReference>
<dbReference type="InterPro" id="IPR012677">
    <property type="entry name" value="Nucleotide-bd_a/b_plait_sf"/>
</dbReference>
<dbReference type="InterPro" id="IPR035979">
    <property type="entry name" value="RBD_domain_sf"/>
</dbReference>
<dbReference type="InterPro" id="IPR000504">
    <property type="entry name" value="RRM_dom"/>
</dbReference>
<dbReference type="InterPro" id="IPR003954">
    <property type="entry name" value="RRM_dom_euk"/>
</dbReference>
<dbReference type="InterPro" id="IPR009145">
    <property type="entry name" value="U2AF_small"/>
</dbReference>
<dbReference type="InterPro" id="IPR000571">
    <property type="entry name" value="Znf_CCCH"/>
</dbReference>
<dbReference type="PANTHER" id="PTHR12620">
    <property type="entry name" value="U2 SNRNP AUXILIARY FACTOR, SMALL SUBUNIT"/>
    <property type="match status" value="1"/>
</dbReference>
<dbReference type="Pfam" id="PF00642">
    <property type="entry name" value="zf-CCCH"/>
    <property type="match status" value="1"/>
</dbReference>
<dbReference type="PRINTS" id="PR01848">
    <property type="entry name" value="U2AUXFACTOR"/>
</dbReference>
<dbReference type="SMART" id="SM00361">
    <property type="entry name" value="RRM_1"/>
    <property type="match status" value="1"/>
</dbReference>
<dbReference type="SMART" id="SM00356">
    <property type="entry name" value="ZnF_C3H1"/>
    <property type="match status" value="2"/>
</dbReference>
<dbReference type="SUPFAM" id="SSF54928">
    <property type="entry name" value="RNA-binding domain, RBD"/>
    <property type="match status" value="1"/>
</dbReference>
<dbReference type="PROSITE" id="PS50102">
    <property type="entry name" value="RRM"/>
    <property type="match status" value="1"/>
</dbReference>
<dbReference type="PROSITE" id="PS50103">
    <property type="entry name" value="ZF_C3H1"/>
    <property type="match status" value="2"/>
</dbReference>
<organism>
    <name type="scientific">Candida albicans (strain SC5314 / ATCC MYA-2876)</name>
    <name type="common">Yeast</name>
    <dbReference type="NCBI Taxonomy" id="237561"/>
    <lineage>
        <taxon>Eukaryota</taxon>
        <taxon>Fungi</taxon>
        <taxon>Dikarya</taxon>
        <taxon>Ascomycota</taxon>
        <taxon>Saccharomycotina</taxon>
        <taxon>Pichiomycetes</taxon>
        <taxon>Debaryomycetaceae</taxon>
        <taxon>Candida/Lodderomyces clade</taxon>
        <taxon>Candida</taxon>
    </lineage>
</organism>
<sequence>MNRSSYSSQSDNRYSRNPAVLCSFYSKIGACRHGEKCSKKHLKPISSRTILLANLYQNPTLNDDDYGHANGIGSETSQIIDNESVIKNSDTVGTVSQIDDSPHSNSGEVTKDETVETQEVETENSENIAETGDVKIDHNEDQKQIEDVKESDKVESSEEVQQDDKLHKEDTLEKESEDNIKQDENIEDAKLEDTEKDKLPEFTISQSQKDFDQFFQDIFVHISKLGQIRDIAVCENENNHLAGNVYVMFESAEDAYNANLQLNQEWYNGKPVYSDLSPVNDFNDACCEEYRDYHDCQRGAMCNYMHVRLPSSDIEESLYESQAKSYMLKQLEELKKELPGDIRSSSSTNDDETNGNENGISSTMAVLEQLS</sequence>
<feature type="chain" id="PRO_0000426092" description="Transcriptional regulator of yeast form adherence 2">
    <location>
        <begin position="1"/>
        <end position="371"/>
    </location>
</feature>
<feature type="domain" description="RRM" evidence="1">
    <location>
        <begin position="192"/>
        <end position="279"/>
    </location>
</feature>
<feature type="zinc finger region" description="C3H1-type 1" evidence="2">
    <location>
        <begin position="16"/>
        <end position="44"/>
    </location>
</feature>
<feature type="zinc finger region" description="C3H1-type 2" evidence="2">
    <location>
        <begin position="281"/>
        <end position="309"/>
    </location>
</feature>
<feature type="region of interest" description="Disordered" evidence="3">
    <location>
        <begin position="94"/>
        <end position="194"/>
    </location>
</feature>
<feature type="region of interest" description="Disordered" evidence="3">
    <location>
        <begin position="337"/>
        <end position="371"/>
    </location>
</feature>
<feature type="compositionally biased region" description="Polar residues" evidence="3">
    <location>
        <begin position="94"/>
        <end position="107"/>
    </location>
</feature>
<feature type="compositionally biased region" description="Acidic residues" evidence="3">
    <location>
        <begin position="115"/>
        <end position="124"/>
    </location>
</feature>
<feature type="compositionally biased region" description="Basic and acidic residues" evidence="3">
    <location>
        <begin position="132"/>
        <end position="194"/>
    </location>
</feature>
<feature type="compositionally biased region" description="Polar residues" evidence="3">
    <location>
        <begin position="355"/>
        <end position="371"/>
    </location>
</feature>
<gene>
    <name type="primary">TRY2</name>
    <name type="synonym">UAF21</name>
    <name type="ordered locus">CAALFM_C105090WA</name>
    <name type="ORF">CaO19.11544</name>
    <name type="ORF">CaO19.4062</name>
</gene>
<proteinExistence type="evidence at transcript level"/>
<evidence type="ECO:0000255" key="1">
    <source>
        <dbReference type="PROSITE-ProRule" id="PRU00176"/>
    </source>
</evidence>
<evidence type="ECO:0000255" key="2">
    <source>
        <dbReference type="PROSITE-ProRule" id="PRU00723"/>
    </source>
</evidence>
<evidence type="ECO:0000256" key="3">
    <source>
        <dbReference type="SAM" id="MobiDB-lite"/>
    </source>
</evidence>
<evidence type="ECO:0000269" key="4">
    <source>
    </source>
</evidence>
<evidence type="ECO:0000269" key="5">
    <source>
    </source>
</evidence>
<evidence type="ECO:0000305" key="6"/>
<protein>
    <recommendedName>
        <fullName>Transcriptional regulator of yeast form adherence 2</fullName>
    </recommendedName>
</protein>
<name>TRY2_CANAL</name>
<keyword id="KW-0130">Cell adhesion</keyword>
<keyword id="KW-0479">Metal-binding</keyword>
<keyword id="KW-0539">Nucleus</keyword>
<keyword id="KW-1185">Reference proteome</keyword>
<keyword id="KW-0677">Repeat</keyword>
<keyword id="KW-0804">Transcription</keyword>
<keyword id="KW-0805">Transcription regulation</keyword>
<keyword id="KW-0862">Zinc</keyword>
<keyword id="KW-0863">Zinc-finger</keyword>
<accession>Q59LX5</accession>
<accession>A0A1D8PDH3</accession>
<comment type="function">
    <text evidence="5">Transcription factor required for yeast cell adherence to silicone substrate.</text>
</comment>
<comment type="subcellular location">
    <subcellularLocation>
        <location evidence="6">Nucleus</location>
    </subcellularLocation>
</comment>
<comment type="induction">
    <text evidence="4">Expression is induced in biofilm.</text>
</comment>
<comment type="disruption phenotype">
    <text evidence="5">Decreases cell adherence to silicone substrate.</text>
</comment>